<gene>
    <name type="primary">ckb-1</name>
    <name type="ORF">B0285.8</name>
</gene>
<comment type="catalytic activity">
    <reaction>
        <text>choline + ATP = phosphocholine + ADP + H(+)</text>
        <dbReference type="Rhea" id="RHEA:12837"/>
        <dbReference type="ChEBI" id="CHEBI:15354"/>
        <dbReference type="ChEBI" id="CHEBI:15378"/>
        <dbReference type="ChEBI" id="CHEBI:30616"/>
        <dbReference type="ChEBI" id="CHEBI:295975"/>
        <dbReference type="ChEBI" id="CHEBI:456216"/>
        <dbReference type="EC" id="2.7.1.32"/>
    </reaction>
</comment>
<comment type="cofactor">
    <cofactor evidence="1">
        <name>Mg(2+)</name>
        <dbReference type="ChEBI" id="CHEBI:18420"/>
    </cofactor>
</comment>
<comment type="similarity">
    <text evidence="2">Belongs to the choline/ethanolamine kinase family.</text>
</comment>
<protein>
    <recommendedName>
        <fullName>Choline kinase B1</fullName>
        <ecNumber>2.7.1.32</ecNumber>
    </recommendedName>
</protein>
<name>CKB1_CAEEL</name>
<sequence length="371" mass="42786">MRPIEKFFTENAPDSDLVIEKVIEFGIDFLGGEWKNVKKNEVKVTTILGGQSNHMFHVTSSTSATPYLLRIHRQGPSHVFMDTVNFAIFSERGLGPKLYGFFDGGRMEEFLPSRTLDSDCILDPEISRRVGAVYPKYHAIDVPVSKKRRCFQVMRESLKEYQDLGGGDYEIKPTTVTYSEHPKKISMDDLYKEIDFMEKWTNELFEDTVVFCHNDLASSNILELNSTKELVLIDWEFGSYNCRGFDLAMHLAETAADFRDSTPPGIRISEELTDNPPNLQGFCEAYVDADNKLKNRVPSNRDLEVSNLICECQFFWPITQLFWACFVMKLALLKYNCGVDMDVQAQDRFAVYWHLKERTRKIYEDLKKGTC</sequence>
<feature type="chain" id="PRO_0000206232" description="Choline kinase B1">
    <location>
        <begin position="1"/>
        <end position="371"/>
    </location>
</feature>
<keyword id="KW-0067">ATP-binding</keyword>
<keyword id="KW-0418">Kinase</keyword>
<keyword id="KW-0444">Lipid biosynthesis</keyword>
<keyword id="KW-0443">Lipid metabolism</keyword>
<keyword id="KW-0460">Magnesium</keyword>
<keyword id="KW-0547">Nucleotide-binding</keyword>
<keyword id="KW-0594">Phospholipid biosynthesis</keyword>
<keyword id="KW-1208">Phospholipid metabolism</keyword>
<keyword id="KW-1185">Reference proteome</keyword>
<keyword id="KW-0808">Transferase</keyword>
<accession>P46558</accession>
<accession>Q8IS24</accession>
<reference key="1">
    <citation type="journal article" date="2003" name="Biochim. Biophys. Acta">
        <title>Multiple isoforms of choline kinase from Caenorhabditis elegans: cloning, expression, purification, and characterization.</title>
        <authorList>
            <person name="Gee P."/>
            <person name="Kent C."/>
        </authorList>
    </citation>
    <scope>NUCLEOTIDE SEQUENCE [MRNA]</scope>
</reference>
<reference key="2">
    <citation type="journal article" date="1998" name="Science">
        <title>Genome sequence of the nematode C. elegans: a platform for investigating biology.</title>
        <authorList>
            <consortium name="The C. elegans sequencing consortium"/>
        </authorList>
    </citation>
    <scope>NUCLEOTIDE SEQUENCE [LARGE SCALE GENOMIC DNA]</scope>
    <source>
        <strain>Bristol N2</strain>
    </source>
</reference>
<dbReference type="EC" id="2.7.1.32"/>
<dbReference type="EMBL" id="AY158690">
    <property type="protein sequence ID" value="AAN41642.1"/>
    <property type="molecule type" value="mRNA"/>
</dbReference>
<dbReference type="EMBL" id="Z34533">
    <property type="protein sequence ID" value="CAA84300.2"/>
    <property type="molecule type" value="Genomic_DNA"/>
</dbReference>
<dbReference type="PIR" id="T18695">
    <property type="entry name" value="T18695"/>
</dbReference>
<dbReference type="RefSeq" id="NP_497879.2">
    <property type="nucleotide sequence ID" value="NM_065478.2"/>
</dbReference>
<dbReference type="SMR" id="P46558"/>
<dbReference type="BioGRID" id="46770">
    <property type="interactions" value="1"/>
</dbReference>
<dbReference type="FunCoup" id="P46558">
    <property type="interactions" value="107"/>
</dbReference>
<dbReference type="STRING" id="6239.B0285.8.1"/>
<dbReference type="PaxDb" id="6239-B0285.8"/>
<dbReference type="PeptideAtlas" id="P46558"/>
<dbReference type="EnsemblMetazoa" id="B0285.8.1">
    <property type="protein sequence ID" value="B0285.8.1"/>
    <property type="gene ID" value="WBGene00000511"/>
</dbReference>
<dbReference type="GeneID" id="181904"/>
<dbReference type="KEGG" id="cel:CELE_B0285.8"/>
<dbReference type="UCSC" id="B0285.8">
    <property type="organism name" value="c. elegans"/>
</dbReference>
<dbReference type="AGR" id="WB:WBGene00000511"/>
<dbReference type="CTD" id="181904"/>
<dbReference type="WormBase" id="B0285.8">
    <property type="protein sequence ID" value="CE33590"/>
    <property type="gene ID" value="WBGene00000511"/>
    <property type="gene designation" value="ckb-1"/>
</dbReference>
<dbReference type="eggNOG" id="KOG2686">
    <property type="taxonomic scope" value="Eukaryota"/>
</dbReference>
<dbReference type="GeneTree" id="ENSGT00950000182939"/>
<dbReference type="HOGENOM" id="CLU_012712_2_0_1"/>
<dbReference type="InParanoid" id="P46558"/>
<dbReference type="OMA" id="NIMETYI"/>
<dbReference type="OrthoDB" id="10267235at2759"/>
<dbReference type="PhylomeDB" id="P46558"/>
<dbReference type="Reactome" id="R-CEL-1483191">
    <property type="pathway name" value="Synthesis of PC"/>
</dbReference>
<dbReference type="Reactome" id="R-CEL-1483213">
    <property type="pathway name" value="Synthesis of PE"/>
</dbReference>
<dbReference type="PRO" id="PR:P46558"/>
<dbReference type="Proteomes" id="UP000001940">
    <property type="component" value="Chromosome III"/>
</dbReference>
<dbReference type="Bgee" id="WBGene00000511">
    <property type="expression patterns" value="Expressed in material anatomical entity and 4 other cell types or tissues"/>
</dbReference>
<dbReference type="GO" id="GO:0005737">
    <property type="term" value="C:cytoplasm"/>
    <property type="evidence" value="ECO:0000318"/>
    <property type="project" value="GO_Central"/>
</dbReference>
<dbReference type="GO" id="GO:0005524">
    <property type="term" value="F:ATP binding"/>
    <property type="evidence" value="ECO:0007669"/>
    <property type="project" value="UniProtKB-KW"/>
</dbReference>
<dbReference type="GO" id="GO:0004103">
    <property type="term" value="F:choline kinase activity"/>
    <property type="evidence" value="ECO:0000318"/>
    <property type="project" value="GO_Central"/>
</dbReference>
<dbReference type="GO" id="GO:0004305">
    <property type="term" value="F:ethanolamine kinase activity"/>
    <property type="evidence" value="ECO:0000318"/>
    <property type="project" value="GO_Central"/>
</dbReference>
<dbReference type="GO" id="GO:0006657">
    <property type="term" value="P:CDP-choline pathway"/>
    <property type="evidence" value="ECO:0000318"/>
    <property type="project" value="GO_Central"/>
</dbReference>
<dbReference type="GO" id="GO:0006646">
    <property type="term" value="P:phosphatidylethanolamine biosynthetic process"/>
    <property type="evidence" value="ECO:0000318"/>
    <property type="project" value="GO_Central"/>
</dbReference>
<dbReference type="Gene3D" id="3.90.1200.10">
    <property type="match status" value="1"/>
</dbReference>
<dbReference type="Gene3D" id="3.30.200.20">
    <property type="entry name" value="Phosphorylase Kinase, domain 1"/>
    <property type="match status" value="1"/>
</dbReference>
<dbReference type="InterPro" id="IPR011009">
    <property type="entry name" value="Kinase-like_dom_sf"/>
</dbReference>
<dbReference type="PANTHER" id="PTHR22603:SF25">
    <property type="entry name" value="CHOLINE KINASE B1-RELATED"/>
    <property type="match status" value="1"/>
</dbReference>
<dbReference type="PANTHER" id="PTHR22603">
    <property type="entry name" value="CHOLINE/ETHANOALAMINE KINASE"/>
    <property type="match status" value="1"/>
</dbReference>
<dbReference type="Pfam" id="PF01633">
    <property type="entry name" value="Choline_kinase"/>
    <property type="match status" value="1"/>
</dbReference>
<dbReference type="SUPFAM" id="SSF56112">
    <property type="entry name" value="Protein kinase-like (PK-like)"/>
    <property type="match status" value="1"/>
</dbReference>
<evidence type="ECO:0000250" key="1"/>
<evidence type="ECO:0000305" key="2"/>
<proteinExistence type="evidence at transcript level"/>
<organism>
    <name type="scientific">Caenorhabditis elegans</name>
    <dbReference type="NCBI Taxonomy" id="6239"/>
    <lineage>
        <taxon>Eukaryota</taxon>
        <taxon>Metazoa</taxon>
        <taxon>Ecdysozoa</taxon>
        <taxon>Nematoda</taxon>
        <taxon>Chromadorea</taxon>
        <taxon>Rhabditida</taxon>
        <taxon>Rhabditina</taxon>
        <taxon>Rhabditomorpha</taxon>
        <taxon>Rhabditoidea</taxon>
        <taxon>Rhabditidae</taxon>
        <taxon>Peloderinae</taxon>
        <taxon>Caenorhabditis</taxon>
    </lineage>
</organism>